<accession>Q97BG1</accession>
<name>COBS_THEVO</name>
<gene>
    <name evidence="1" type="primary">cobS</name>
    <name type="ordered locus">TV0495</name>
    <name type="ORF">TVG0479924</name>
</gene>
<feature type="chain" id="PRO_0000146924" description="Adenosylcobinamide-GDP ribazoletransferase">
    <location>
        <begin position="1"/>
        <end position="259"/>
    </location>
</feature>
<feature type="transmembrane region" description="Helical" evidence="1">
    <location>
        <begin position="27"/>
        <end position="47"/>
    </location>
</feature>
<feature type="transmembrane region" description="Helical" evidence="1">
    <location>
        <begin position="51"/>
        <end position="71"/>
    </location>
</feature>
<feature type="transmembrane region" description="Helical" evidence="1">
    <location>
        <begin position="100"/>
        <end position="120"/>
    </location>
</feature>
<feature type="transmembrane region" description="Helical" evidence="1">
    <location>
        <begin position="124"/>
        <end position="144"/>
    </location>
</feature>
<feature type="transmembrane region" description="Helical" evidence="1">
    <location>
        <begin position="175"/>
        <end position="195"/>
    </location>
</feature>
<feature type="transmembrane region" description="Helical" evidence="1">
    <location>
        <begin position="219"/>
        <end position="239"/>
    </location>
</feature>
<reference key="1">
    <citation type="journal article" date="2000" name="Proc. Natl. Acad. Sci. U.S.A.">
        <title>Archaeal adaptation to higher temperatures revealed by genomic sequence of Thermoplasma volcanium.</title>
        <authorList>
            <person name="Kawashima T."/>
            <person name="Amano N."/>
            <person name="Koike H."/>
            <person name="Makino S."/>
            <person name="Higuchi S."/>
            <person name="Kawashima-Ohya Y."/>
            <person name="Watanabe K."/>
            <person name="Yamazaki M."/>
            <person name="Kanehori K."/>
            <person name="Kawamoto T."/>
            <person name="Nunoshiba T."/>
            <person name="Yamamoto Y."/>
            <person name="Aramaki H."/>
            <person name="Makino K."/>
            <person name="Suzuki M."/>
        </authorList>
    </citation>
    <scope>NUCLEOTIDE SEQUENCE [LARGE SCALE GENOMIC DNA]</scope>
    <source>
        <strain>ATCC 51530 / DSM 4299 / JCM 9571 / NBRC 15438 / GSS1</strain>
    </source>
</reference>
<evidence type="ECO:0000255" key="1">
    <source>
        <dbReference type="HAMAP-Rule" id="MF_00719"/>
    </source>
</evidence>
<sequence length="259" mass="28310">MMISGLRSSFSFFTLVPSRQKDIGNPITFLPLVVTVGALIGDSILYITWQFSHLIASFLSISSIIIYNGLNHFDATADLGDALMVRDKSRIPEVIKDHHVGAGGIFAVIFVYGIAVLSLARSTLYIGLVGILIGQVVSGSSMMISLIGSQPFVPGLADYFISLFRKHSVGYTIEFLAIPIIVSFIFSPLYVVIVALNLLIVQLTKTMISRRFGGINGDVIGFLGEFSRSLFIFMLIIIAHYNVASTYDIFSKMLSSFTS</sequence>
<protein>
    <recommendedName>
        <fullName evidence="1">Adenosylcobinamide-GDP ribazoletransferase</fullName>
        <ecNumber evidence="1">2.7.8.26</ecNumber>
    </recommendedName>
    <alternativeName>
        <fullName evidence="1">Cobalamin synthase</fullName>
    </alternativeName>
    <alternativeName>
        <fullName evidence="1">Cobalamin-5'-phosphate synthase</fullName>
    </alternativeName>
</protein>
<keyword id="KW-1003">Cell membrane</keyword>
<keyword id="KW-0169">Cobalamin biosynthesis</keyword>
<keyword id="KW-0460">Magnesium</keyword>
<keyword id="KW-0472">Membrane</keyword>
<keyword id="KW-0808">Transferase</keyword>
<keyword id="KW-0812">Transmembrane</keyword>
<keyword id="KW-1133">Transmembrane helix</keyword>
<dbReference type="EC" id="2.7.8.26" evidence="1"/>
<dbReference type="EMBL" id="BA000011">
    <property type="protein sequence ID" value="BAB59637.1"/>
    <property type="molecule type" value="Genomic_DNA"/>
</dbReference>
<dbReference type="STRING" id="273116.gene:9381277"/>
<dbReference type="PaxDb" id="273116-14324710"/>
<dbReference type="KEGG" id="tvo:TVG0479924"/>
<dbReference type="eggNOG" id="arCOG04338">
    <property type="taxonomic scope" value="Archaea"/>
</dbReference>
<dbReference type="HOGENOM" id="CLU_057426_2_0_2"/>
<dbReference type="PhylomeDB" id="Q97BG1"/>
<dbReference type="UniPathway" id="UPA00148">
    <property type="reaction ID" value="UER00238"/>
</dbReference>
<dbReference type="Proteomes" id="UP000001017">
    <property type="component" value="Chromosome"/>
</dbReference>
<dbReference type="GO" id="GO:0005886">
    <property type="term" value="C:plasma membrane"/>
    <property type="evidence" value="ECO:0007669"/>
    <property type="project" value="UniProtKB-SubCell"/>
</dbReference>
<dbReference type="GO" id="GO:0051073">
    <property type="term" value="F:adenosylcobinamide-GDP ribazoletransferase activity"/>
    <property type="evidence" value="ECO:0007669"/>
    <property type="project" value="UniProtKB-UniRule"/>
</dbReference>
<dbReference type="GO" id="GO:0008818">
    <property type="term" value="F:cobalamin 5'-phosphate synthase activity"/>
    <property type="evidence" value="ECO:0007669"/>
    <property type="project" value="UniProtKB-UniRule"/>
</dbReference>
<dbReference type="GO" id="GO:0009236">
    <property type="term" value="P:cobalamin biosynthetic process"/>
    <property type="evidence" value="ECO:0007669"/>
    <property type="project" value="UniProtKB-UniRule"/>
</dbReference>
<dbReference type="HAMAP" id="MF_00719">
    <property type="entry name" value="CobS"/>
    <property type="match status" value="1"/>
</dbReference>
<dbReference type="InterPro" id="IPR003805">
    <property type="entry name" value="CobS"/>
</dbReference>
<dbReference type="NCBIfam" id="TIGR00317">
    <property type="entry name" value="cobS"/>
    <property type="match status" value="1"/>
</dbReference>
<dbReference type="PANTHER" id="PTHR34148">
    <property type="entry name" value="ADENOSYLCOBINAMIDE-GDP RIBAZOLETRANSFERASE"/>
    <property type="match status" value="1"/>
</dbReference>
<dbReference type="PANTHER" id="PTHR34148:SF1">
    <property type="entry name" value="ADENOSYLCOBINAMIDE-GDP RIBAZOLETRANSFERASE"/>
    <property type="match status" value="1"/>
</dbReference>
<dbReference type="Pfam" id="PF02654">
    <property type="entry name" value="CobS"/>
    <property type="match status" value="1"/>
</dbReference>
<proteinExistence type="inferred from homology"/>
<organism>
    <name type="scientific">Thermoplasma volcanium (strain ATCC 51530 / DSM 4299 / JCM 9571 / NBRC 15438 / GSS1)</name>
    <dbReference type="NCBI Taxonomy" id="273116"/>
    <lineage>
        <taxon>Archaea</taxon>
        <taxon>Methanobacteriati</taxon>
        <taxon>Thermoplasmatota</taxon>
        <taxon>Thermoplasmata</taxon>
        <taxon>Thermoplasmatales</taxon>
        <taxon>Thermoplasmataceae</taxon>
        <taxon>Thermoplasma</taxon>
    </lineage>
</organism>
<comment type="function">
    <text evidence="1">Joins adenosylcobinamide-GDP and alpha-ribazole to generate adenosylcobalamin (Ado-cobalamin). Also synthesizes adenosylcobalamin 5'-phosphate from adenosylcobinamide-GDP and alpha-ribazole 5'-phosphate.</text>
</comment>
<comment type="catalytic activity">
    <reaction evidence="1">
        <text>alpha-ribazole + adenosylcob(III)inamide-GDP = adenosylcob(III)alamin + GMP + H(+)</text>
        <dbReference type="Rhea" id="RHEA:16049"/>
        <dbReference type="ChEBI" id="CHEBI:10329"/>
        <dbReference type="ChEBI" id="CHEBI:15378"/>
        <dbReference type="ChEBI" id="CHEBI:18408"/>
        <dbReference type="ChEBI" id="CHEBI:58115"/>
        <dbReference type="ChEBI" id="CHEBI:60487"/>
        <dbReference type="EC" id="2.7.8.26"/>
    </reaction>
</comment>
<comment type="catalytic activity">
    <reaction evidence="1">
        <text>alpha-ribazole 5'-phosphate + adenosylcob(III)inamide-GDP = adenosylcob(III)alamin 5'-phosphate + GMP + H(+)</text>
        <dbReference type="Rhea" id="RHEA:23560"/>
        <dbReference type="ChEBI" id="CHEBI:15378"/>
        <dbReference type="ChEBI" id="CHEBI:57918"/>
        <dbReference type="ChEBI" id="CHEBI:58115"/>
        <dbReference type="ChEBI" id="CHEBI:60487"/>
        <dbReference type="ChEBI" id="CHEBI:60493"/>
        <dbReference type="EC" id="2.7.8.26"/>
    </reaction>
</comment>
<comment type="cofactor">
    <cofactor evidence="1">
        <name>Mg(2+)</name>
        <dbReference type="ChEBI" id="CHEBI:18420"/>
    </cofactor>
</comment>
<comment type="pathway">
    <text evidence="1">Cofactor biosynthesis; adenosylcobalamin biosynthesis; adenosylcobalamin from cob(II)yrinate a,c-diamide: step 7/7.</text>
</comment>
<comment type="subcellular location">
    <subcellularLocation>
        <location evidence="1">Cell membrane</location>
        <topology evidence="1">Multi-pass membrane protein</topology>
    </subcellularLocation>
</comment>
<comment type="similarity">
    <text evidence="1">Belongs to the CobS family.</text>
</comment>